<reference key="1">
    <citation type="journal article" date="1989" name="Mol. Microbiol.">
        <title>Cloning and analysis of the gene for the major outer membrane lipoprotein from Pseudomonas aeruginosa.</title>
        <authorList>
            <person name="Cornelis P."/>
            <person name="Bouia A."/>
            <person name="Belarbi A."/>
            <person name="Guyonvarch A."/>
            <person name="Kammerer B."/>
            <person name="Hannaert V."/>
            <person name="Hubert J.-C."/>
        </authorList>
    </citation>
    <scope>NUCLEOTIDE SEQUENCE [GENOMIC DNA]</scope>
    <source>
        <strain>Isolate PA2</strain>
    </source>
</reference>
<reference key="2">
    <citation type="journal article" date="1989" name="J. Bacteriol.">
        <title>Pseudomonas aeruginosa outer membrane lipoprotein I gene: molecular cloning, sequence, and expression in Escherichia coli.</title>
        <authorList>
            <person name="Duchene M."/>
            <person name="Barron C."/>
            <person name="Schweizer A."/>
            <person name="von Sprecht B.-U."/>
            <person name="Domdey H."/>
        </authorList>
    </citation>
    <scope>NUCLEOTIDE SEQUENCE [GENOMIC DNA]</scope>
</reference>
<reference key="3">
    <citation type="journal article" date="1992" name="J. Gen. Microbiol.">
        <title>Specificity of the Pseudomonas aeruginosa PAO1 lipoprotein I gene as a DNA probe and PCR target region within the Pseudomonadaceae.</title>
        <authorList>
            <person name="Saint-Onge A."/>
            <person name="Romeyer F."/>
            <person name="Lebel P."/>
            <person name="Masson L."/>
            <person name="Brousseau R."/>
        </authorList>
    </citation>
    <scope>NUCLEOTIDE SEQUENCE [GENOMIC DNA]</scope>
    <source>
        <strain>ATCC 15692 / DSM 22644 / CIP 104116 / JCM 14847 / LMG 12228 / 1C / PRS 101 / PAO1</strain>
    </source>
</reference>
<reference key="4">
    <citation type="journal article" date="2000" name="Nature">
        <title>Complete genome sequence of Pseudomonas aeruginosa PAO1, an opportunistic pathogen.</title>
        <authorList>
            <person name="Stover C.K."/>
            <person name="Pham X.-Q.T."/>
            <person name="Erwin A.L."/>
            <person name="Mizoguchi S.D."/>
            <person name="Warrener P."/>
            <person name="Hickey M.J."/>
            <person name="Brinkman F.S.L."/>
            <person name="Hufnagle W.O."/>
            <person name="Kowalik D.J."/>
            <person name="Lagrou M."/>
            <person name="Garber R.L."/>
            <person name="Goltry L."/>
            <person name="Tolentino E."/>
            <person name="Westbrock-Wadman S."/>
            <person name="Yuan Y."/>
            <person name="Brody L.L."/>
            <person name="Coulter S.N."/>
            <person name="Folger K.R."/>
            <person name="Kas A."/>
            <person name="Larbig K."/>
            <person name="Lim R.M."/>
            <person name="Smith K.A."/>
            <person name="Spencer D.H."/>
            <person name="Wong G.K.-S."/>
            <person name="Wu Z."/>
            <person name="Paulsen I.T."/>
            <person name="Reizer J."/>
            <person name="Saier M.H. Jr."/>
            <person name="Hancock R.E.W."/>
            <person name="Lory S."/>
            <person name="Olson M.V."/>
        </authorList>
    </citation>
    <scope>NUCLEOTIDE SEQUENCE [LARGE SCALE GENOMIC DNA]</scope>
    <source>
        <strain>ATCC 15692 / DSM 22644 / CIP 104116 / JCM 14847 / LMG 12228 / 1C / PRS 101 / PAO1</strain>
    </source>
</reference>
<keyword id="KW-0998">Cell outer membrane</keyword>
<keyword id="KW-0449">Lipoprotein</keyword>
<keyword id="KW-0472">Membrane</keyword>
<keyword id="KW-0564">Palmitate</keyword>
<keyword id="KW-1185">Reference proteome</keyword>
<keyword id="KW-0732">Signal</keyword>
<gene>
    <name type="primary">oprI</name>
    <name type="ordered locus">PA2853</name>
</gene>
<sequence length="83" mass="8835">MNNVLKFSALALAAVLATGCSSHSKETEARLTATEDAAARAQARADEAYRKADEALGAAQKAQQTADEANERALRMLEKASRK</sequence>
<protein>
    <recommendedName>
        <fullName>Major outer membrane lipoprotein</fullName>
        <shortName>Outer membrane lipoprotein I</shortName>
    </recommendedName>
</protein>
<comment type="subcellular location">
    <subcellularLocation>
        <location>Cell outer membrane</location>
        <topology>Lipid-anchor</topology>
    </subcellularLocation>
</comment>
<dbReference type="EMBL" id="X13748">
    <property type="protein sequence ID" value="CAA32013.1"/>
    <property type="molecule type" value="Genomic_DNA"/>
</dbReference>
<dbReference type="EMBL" id="M25761">
    <property type="protein sequence ID" value="AAA25880.1"/>
    <property type="molecule type" value="Genomic_DNA"/>
</dbReference>
<dbReference type="EMBL" id="X58714">
    <property type="protein sequence ID" value="CAA41550.1"/>
    <property type="molecule type" value="Genomic_DNA"/>
</dbReference>
<dbReference type="EMBL" id="AE004091">
    <property type="protein sequence ID" value="AAG06241.1"/>
    <property type="molecule type" value="Genomic_DNA"/>
</dbReference>
<dbReference type="PIR" id="A33854">
    <property type="entry name" value="A33854"/>
</dbReference>
<dbReference type="RefSeq" id="NP_251543.1">
    <property type="nucleotide sequence ID" value="NC_002516.2"/>
</dbReference>
<dbReference type="RefSeq" id="WP_003090944.1">
    <property type="nucleotide sequence ID" value="NZ_QZGE01000011.1"/>
</dbReference>
<dbReference type="SMR" id="P11221"/>
<dbReference type="STRING" id="208964.PA2853"/>
<dbReference type="PaxDb" id="208964-PA2853"/>
<dbReference type="ABCD" id="P11221">
    <property type="antibodies" value="1 sequenced antibody"/>
</dbReference>
<dbReference type="DNASU" id="879851"/>
<dbReference type="GeneID" id="77220643"/>
<dbReference type="GeneID" id="879851"/>
<dbReference type="KEGG" id="pae:PA2853"/>
<dbReference type="PATRIC" id="fig|208964.12.peg.2993"/>
<dbReference type="PseudoCAP" id="PA2853"/>
<dbReference type="HOGENOM" id="CLU_191518_0_0_6"/>
<dbReference type="InParanoid" id="P11221"/>
<dbReference type="OrthoDB" id="7026503at2"/>
<dbReference type="PhylomeDB" id="P11221"/>
<dbReference type="BioCyc" id="PAER208964:G1FZ6-2903-MONOMER"/>
<dbReference type="Proteomes" id="UP000002438">
    <property type="component" value="Chromosome"/>
</dbReference>
<dbReference type="GO" id="GO:0009279">
    <property type="term" value="C:cell outer membrane"/>
    <property type="evidence" value="ECO:0007669"/>
    <property type="project" value="UniProtKB-SubCell"/>
</dbReference>
<dbReference type="GO" id="GO:0019867">
    <property type="term" value="C:outer membrane"/>
    <property type="evidence" value="ECO:0000314"/>
    <property type="project" value="PseudoCAP"/>
</dbReference>
<dbReference type="InterPro" id="IPR021793">
    <property type="entry name" value="Oprl"/>
</dbReference>
<dbReference type="NCBIfam" id="NF040598">
    <property type="entry name" value="Ala_zip_lipo"/>
    <property type="match status" value="1"/>
</dbReference>
<dbReference type="Pfam" id="PF11839">
    <property type="entry name" value="Alanine_zipper"/>
    <property type="match status" value="1"/>
</dbReference>
<dbReference type="PROSITE" id="PS51257">
    <property type="entry name" value="PROKAR_LIPOPROTEIN"/>
    <property type="match status" value="1"/>
</dbReference>
<feature type="signal peptide" evidence="1">
    <location>
        <begin position="1"/>
        <end position="19"/>
    </location>
</feature>
<feature type="chain" id="PRO_0000018026" description="Major outer membrane lipoprotein">
    <location>
        <begin position="20"/>
        <end position="83"/>
    </location>
</feature>
<feature type="lipid moiety-binding region" description="N-palmitoyl cysteine" evidence="1">
    <location>
        <position position="20"/>
    </location>
</feature>
<feature type="lipid moiety-binding region" description="S-diacylglycerol cysteine" evidence="1">
    <location>
        <position position="20"/>
    </location>
</feature>
<proteinExistence type="inferred from homology"/>
<organism>
    <name type="scientific">Pseudomonas aeruginosa (strain ATCC 15692 / DSM 22644 / CIP 104116 / JCM 14847 / LMG 12228 / 1C / PRS 101 / PAO1)</name>
    <dbReference type="NCBI Taxonomy" id="208964"/>
    <lineage>
        <taxon>Bacteria</taxon>
        <taxon>Pseudomonadati</taxon>
        <taxon>Pseudomonadota</taxon>
        <taxon>Gammaproteobacteria</taxon>
        <taxon>Pseudomonadales</taxon>
        <taxon>Pseudomonadaceae</taxon>
        <taxon>Pseudomonas</taxon>
    </lineage>
</organism>
<name>OPRI_PSEAE</name>
<accession>P11221</accession>
<evidence type="ECO:0000255" key="1">
    <source>
        <dbReference type="PROSITE-ProRule" id="PRU00303"/>
    </source>
</evidence>